<keyword id="KW-0963">Cytoplasm</keyword>
<keyword id="KW-0255">Endonuclease</keyword>
<keyword id="KW-0378">Hydrolase</keyword>
<keyword id="KW-0460">Magnesium</keyword>
<keyword id="KW-0479">Metal-binding</keyword>
<keyword id="KW-0507">mRNA processing</keyword>
<keyword id="KW-0540">Nuclease</keyword>
<keyword id="KW-0694">RNA-binding</keyword>
<keyword id="KW-0698">rRNA processing</keyword>
<keyword id="KW-0699">rRNA-binding</keyword>
<keyword id="KW-0819">tRNA processing</keyword>
<gene>
    <name evidence="1" type="primary">rnc</name>
    <name type="ordered locus">Moth_0951</name>
</gene>
<comment type="function">
    <text evidence="1">Digests double-stranded RNA. Involved in the processing of primary rRNA transcript to yield the immediate precursors to the large and small rRNAs (23S and 16S). Processes some mRNAs, and tRNAs when they are encoded in the rRNA operon. Processes pre-crRNA and tracrRNA of type II CRISPR loci if present in the organism.</text>
</comment>
<comment type="catalytic activity">
    <reaction evidence="1">
        <text>Endonucleolytic cleavage to 5'-phosphomonoester.</text>
        <dbReference type="EC" id="3.1.26.3"/>
    </reaction>
</comment>
<comment type="cofactor">
    <cofactor evidence="1">
        <name>Mg(2+)</name>
        <dbReference type="ChEBI" id="CHEBI:18420"/>
    </cofactor>
</comment>
<comment type="subunit">
    <text evidence="1">Homodimer.</text>
</comment>
<comment type="subcellular location">
    <subcellularLocation>
        <location evidence="1">Cytoplasm</location>
    </subcellularLocation>
</comment>
<comment type="similarity">
    <text evidence="1">Belongs to the ribonuclease III family.</text>
</comment>
<reference key="1">
    <citation type="journal article" date="2008" name="Environ. Microbiol.">
        <title>The complete genome sequence of Moorella thermoacetica (f. Clostridium thermoaceticum).</title>
        <authorList>
            <person name="Pierce E."/>
            <person name="Xie G."/>
            <person name="Barabote R.D."/>
            <person name="Saunders E."/>
            <person name="Han C.S."/>
            <person name="Detter J.C."/>
            <person name="Richardson P."/>
            <person name="Brettin T.S."/>
            <person name="Das A."/>
            <person name="Ljungdahl L.G."/>
            <person name="Ragsdale S.W."/>
        </authorList>
    </citation>
    <scope>NUCLEOTIDE SEQUENCE [LARGE SCALE GENOMIC DNA]</scope>
    <source>
        <strain>ATCC 39073 / JCM 9320</strain>
    </source>
</reference>
<sequence>MDNKRQEQLQHFWEQFHLPAIDLEGLDLALTHPTYAFEHHLPGDNQRLEFLGDAVLGLVVATYLYQHFPQLPEGDLTRMRAAVVCEASLVKVARRLRVGDLLRLGQGEEHSGGRERPSNLADAMEAIIGSVYLSGGYELARDFVLQIFTPALEILSDTSFIDSKSALQEFVQSQGTENVVYKILEEWGPDHAKGYKAGVFLKNRLLATGLGHSKKEAEREAARAALALLKVQG</sequence>
<accession>Q2RJX2</accession>
<evidence type="ECO:0000255" key="1">
    <source>
        <dbReference type="HAMAP-Rule" id="MF_00104"/>
    </source>
</evidence>
<dbReference type="EC" id="3.1.26.3" evidence="1"/>
<dbReference type="EMBL" id="CP000232">
    <property type="protein sequence ID" value="ABC19267.1"/>
    <property type="molecule type" value="Genomic_DNA"/>
</dbReference>
<dbReference type="RefSeq" id="YP_429810.1">
    <property type="nucleotide sequence ID" value="NC_007644.1"/>
</dbReference>
<dbReference type="SMR" id="Q2RJX2"/>
<dbReference type="STRING" id="264732.Moth_0951"/>
<dbReference type="EnsemblBacteria" id="ABC19267">
    <property type="protein sequence ID" value="ABC19267"/>
    <property type="gene ID" value="Moth_0951"/>
</dbReference>
<dbReference type="KEGG" id="mta:Moth_0951"/>
<dbReference type="PATRIC" id="fig|264732.11.peg.1023"/>
<dbReference type="eggNOG" id="COG0571">
    <property type="taxonomic scope" value="Bacteria"/>
</dbReference>
<dbReference type="HOGENOM" id="CLU_000907_1_3_9"/>
<dbReference type="OrthoDB" id="9805026at2"/>
<dbReference type="GO" id="GO:0005737">
    <property type="term" value="C:cytoplasm"/>
    <property type="evidence" value="ECO:0007669"/>
    <property type="project" value="UniProtKB-SubCell"/>
</dbReference>
<dbReference type="GO" id="GO:0003725">
    <property type="term" value="F:double-stranded RNA binding"/>
    <property type="evidence" value="ECO:0007669"/>
    <property type="project" value="TreeGrafter"/>
</dbReference>
<dbReference type="GO" id="GO:0046872">
    <property type="term" value="F:metal ion binding"/>
    <property type="evidence" value="ECO:0007669"/>
    <property type="project" value="UniProtKB-KW"/>
</dbReference>
<dbReference type="GO" id="GO:0004525">
    <property type="term" value="F:ribonuclease III activity"/>
    <property type="evidence" value="ECO:0007669"/>
    <property type="project" value="UniProtKB-UniRule"/>
</dbReference>
<dbReference type="GO" id="GO:0019843">
    <property type="term" value="F:rRNA binding"/>
    <property type="evidence" value="ECO:0007669"/>
    <property type="project" value="UniProtKB-KW"/>
</dbReference>
<dbReference type="GO" id="GO:0006397">
    <property type="term" value="P:mRNA processing"/>
    <property type="evidence" value="ECO:0007669"/>
    <property type="project" value="UniProtKB-UniRule"/>
</dbReference>
<dbReference type="GO" id="GO:0010468">
    <property type="term" value="P:regulation of gene expression"/>
    <property type="evidence" value="ECO:0007669"/>
    <property type="project" value="TreeGrafter"/>
</dbReference>
<dbReference type="GO" id="GO:0006364">
    <property type="term" value="P:rRNA processing"/>
    <property type="evidence" value="ECO:0007669"/>
    <property type="project" value="UniProtKB-UniRule"/>
</dbReference>
<dbReference type="GO" id="GO:0008033">
    <property type="term" value="P:tRNA processing"/>
    <property type="evidence" value="ECO:0007669"/>
    <property type="project" value="UniProtKB-KW"/>
</dbReference>
<dbReference type="CDD" id="cd10845">
    <property type="entry name" value="DSRM_RNAse_III_family"/>
    <property type="match status" value="1"/>
</dbReference>
<dbReference type="CDD" id="cd00593">
    <property type="entry name" value="RIBOc"/>
    <property type="match status" value="1"/>
</dbReference>
<dbReference type="FunFam" id="1.10.1520.10:FF:000001">
    <property type="entry name" value="Ribonuclease 3"/>
    <property type="match status" value="1"/>
</dbReference>
<dbReference type="Gene3D" id="3.30.160.20">
    <property type="match status" value="1"/>
</dbReference>
<dbReference type="Gene3D" id="1.10.1520.10">
    <property type="entry name" value="Ribonuclease III domain"/>
    <property type="match status" value="1"/>
</dbReference>
<dbReference type="HAMAP" id="MF_00104">
    <property type="entry name" value="RNase_III"/>
    <property type="match status" value="1"/>
</dbReference>
<dbReference type="InterPro" id="IPR014720">
    <property type="entry name" value="dsRBD_dom"/>
</dbReference>
<dbReference type="InterPro" id="IPR011907">
    <property type="entry name" value="RNase_III"/>
</dbReference>
<dbReference type="InterPro" id="IPR000999">
    <property type="entry name" value="RNase_III_dom"/>
</dbReference>
<dbReference type="InterPro" id="IPR036389">
    <property type="entry name" value="RNase_III_sf"/>
</dbReference>
<dbReference type="NCBIfam" id="TIGR02191">
    <property type="entry name" value="RNaseIII"/>
    <property type="match status" value="1"/>
</dbReference>
<dbReference type="PANTHER" id="PTHR11207:SF0">
    <property type="entry name" value="RIBONUCLEASE 3"/>
    <property type="match status" value="1"/>
</dbReference>
<dbReference type="PANTHER" id="PTHR11207">
    <property type="entry name" value="RIBONUCLEASE III"/>
    <property type="match status" value="1"/>
</dbReference>
<dbReference type="Pfam" id="PF00035">
    <property type="entry name" value="dsrm"/>
    <property type="match status" value="1"/>
</dbReference>
<dbReference type="Pfam" id="PF14622">
    <property type="entry name" value="Ribonucleas_3_3"/>
    <property type="match status" value="1"/>
</dbReference>
<dbReference type="SMART" id="SM00358">
    <property type="entry name" value="DSRM"/>
    <property type="match status" value="1"/>
</dbReference>
<dbReference type="SMART" id="SM00535">
    <property type="entry name" value="RIBOc"/>
    <property type="match status" value="1"/>
</dbReference>
<dbReference type="SUPFAM" id="SSF54768">
    <property type="entry name" value="dsRNA-binding domain-like"/>
    <property type="match status" value="1"/>
</dbReference>
<dbReference type="SUPFAM" id="SSF69065">
    <property type="entry name" value="RNase III domain-like"/>
    <property type="match status" value="1"/>
</dbReference>
<dbReference type="PROSITE" id="PS50137">
    <property type="entry name" value="DS_RBD"/>
    <property type="match status" value="1"/>
</dbReference>
<dbReference type="PROSITE" id="PS00517">
    <property type="entry name" value="RNASE_3_1"/>
    <property type="match status" value="1"/>
</dbReference>
<dbReference type="PROSITE" id="PS50142">
    <property type="entry name" value="RNASE_3_2"/>
    <property type="match status" value="1"/>
</dbReference>
<feature type="chain" id="PRO_1000075779" description="Ribonuclease 3">
    <location>
        <begin position="1"/>
        <end position="233"/>
    </location>
</feature>
<feature type="domain" description="RNase III" evidence="1">
    <location>
        <begin position="9"/>
        <end position="136"/>
    </location>
</feature>
<feature type="domain" description="DRBM" evidence="1">
    <location>
        <begin position="162"/>
        <end position="231"/>
    </location>
</feature>
<feature type="active site" evidence="1">
    <location>
        <position position="53"/>
    </location>
</feature>
<feature type="active site" evidence="1">
    <location>
        <position position="125"/>
    </location>
</feature>
<feature type="binding site" evidence="1">
    <location>
        <position position="49"/>
    </location>
    <ligand>
        <name>Mg(2+)</name>
        <dbReference type="ChEBI" id="CHEBI:18420"/>
    </ligand>
</feature>
<feature type="binding site" evidence="1">
    <location>
        <position position="122"/>
    </location>
    <ligand>
        <name>Mg(2+)</name>
        <dbReference type="ChEBI" id="CHEBI:18420"/>
    </ligand>
</feature>
<feature type="binding site" evidence="1">
    <location>
        <position position="125"/>
    </location>
    <ligand>
        <name>Mg(2+)</name>
        <dbReference type="ChEBI" id="CHEBI:18420"/>
    </ligand>
</feature>
<name>RNC_MOOTA</name>
<protein>
    <recommendedName>
        <fullName evidence="1">Ribonuclease 3</fullName>
        <ecNumber evidence="1">3.1.26.3</ecNumber>
    </recommendedName>
    <alternativeName>
        <fullName evidence="1">Ribonuclease III</fullName>
        <shortName evidence="1">RNase III</shortName>
    </alternativeName>
</protein>
<proteinExistence type="inferred from homology"/>
<organism>
    <name type="scientific">Moorella thermoacetica (strain ATCC 39073 / JCM 9320)</name>
    <dbReference type="NCBI Taxonomy" id="264732"/>
    <lineage>
        <taxon>Bacteria</taxon>
        <taxon>Bacillati</taxon>
        <taxon>Bacillota</taxon>
        <taxon>Clostridia</taxon>
        <taxon>Moorellales</taxon>
        <taxon>Moorellaceae</taxon>
        <taxon>Moorella</taxon>
    </lineage>
</organism>